<comment type="function">
    <text evidence="1">Involved in the anomeric conversion of L-rhamnose.</text>
</comment>
<comment type="catalytic activity">
    <reaction evidence="1">
        <text>alpha-L-rhamnose = beta-L-rhamnose</text>
        <dbReference type="Rhea" id="RHEA:25584"/>
        <dbReference type="ChEBI" id="CHEBI:27586"/>
        <dbReference type="ChEBI" id="CHEBI:27907"/>
        <dbReference type="EC" id="5.1.3.32"/>
    </reaction>
</comment>
<comment type="pathway">
    <text evidence="1">Carbohydrate metabolism; L-rhamnose metabolism.</text>
</comment>
<comment type="subunit">
    <text evidence="1">Homodimer.</text>
</comment>
<comment type="subcellular location">
    <subcellularLocation>
        <location evidence="1">Cytoplasm</location>
    </subcellularLocation>
</comment>
<comment type="similarity">
    <text evidence="1">Belongs to the rhamnose mutarotase family.</text>
</comment>
<feature type="chain" id="PRO_0000344569" description="L-rhamnose mutarotase">
    <location>
        <begin position="1"/>
        <end position="104"/>
    </location>
</feature>
<feature type="active site" description="Proton donor" evidence="1">
    <location>
        <position position="22"/>
    </location>
</feature>
<feature type="binding site" evidence="1">
    <location>
        <position position="18"/>
    </location>
    <ligand>
        <name>substrate</name>
    </ligand>
</feature>
<feature type="binding site" evidence="1">
    <location>
        <position position="41"/>
    </location>
    <ligand>
        <name>substrate</name>
    </ligand>
</feature>
<feature type="binding site" evidence="1">
    <location>
        <begin position="76"/>
        <end position="77"/>
    </location>
    <ligand>
        <name>substrate</name>
    </ligand>
</feature>
<reference key="1">
    <citation type="submission" date="2008-02" db="EMBL/GenBank/DDBJ databases">
        <title>Complete sequence of Escherichia coli C str. ATCC 8739.</title>
        <authorList>
            <person name="Copeland A."/>
            <person name="Lucas S."/>
            <person name="Lapidus A."/>
            <person name="Glavina del Rio T."/>
            <person name="Dalin E."/>
            <person name="Tice H."/>
            <person name="Bruce D."/>
            <person name="Goodwin L."/>
            <person name="Pitluck S."/>
            <person name="Kiss H."/>
            <person name="Brettin T."/>
            <person name="Detter J.C."/>
            <person name="Han C."/>
            <person name="Kuske C.R."/>
            <person name="Schmutz J."/>
            <person name="Larimer F."/>
            <person name="Land M."/>
            <person name="Hauser L."/>
            <person name="Kyrpides N."/>
            <person name="Mikhailova N."/>
            <person name="Ingram L."/>
            <person name="Richardson P."/>
        </authorList>
    </citation>
    <scope>NUCLEOTIDE SEQUENCE [LARGE SCALE GENOMIC DNA]</scope>
    <source>
        <strain>ATCC 8739 / DSM 1576 / NBRC 3972 / NCIMB 8545 / WDCM 00012 / Crooks</strain>
    </source>
</reference>
<evidence type="ECO:0000255" key="1">
    <source>
        <dbReference type="HAMAP-Rule" id="MF_01663"/>
    </source>
</evidence>
<sequence>MIRKAFVMQVNPDAHEEYQRRHNPIWPELEAVLKSHGAHNYAIYLDKARNLLFAMVEIESEERWNAVASTDVCQRWWKYMTDVMPANPDNSPVSSELQEVFYLP</sequence>
<accession>B1IVH7</accession>
<organism>
    <name type="scientific">Escherichia coli (strain ATCC 8739 / DSM 1576 / NBRC 3972 / NCIMB 8545 / WDCM 00012 / Crooks)</name>
    <dbReference type="NCBI Taxonomy" id="481805"/>
    <lineage>
        <taxon>Bacteria</taxon>
        <taxon>Pseudomonadati</taxon>
        <taxon>Pseudomonadota</taxon>
        <taxon>Gammaproteobacteria</taxon>
        <taxon>Enterobacterales</taxon>
        <taxon>Enterobacteriaceae</taxon>
        <taxon>Escherichia</taxon>
    </lineage>
</organism>
<keyword id="KW-0119">Carbohydrate metabolism</keyword>
<keyword id="KW-0963">Cytoplasm</keyword>
<keyword id="KW-0413">Isomerase</keyword>
<keyword id="KW-0684">Rhamnose metabolism</keyword>
<proteinExistence type="inferred from homology"/>
<dbReference type="EC" id="5.1.3.32" evidence="1"/>
<dbReference type="EMBL" id="CP000946">
    <property type="protein sequence ID" value="ACA79714.1"/>
    <property type="molecule type" value="Genomic_DNA"/>
</dbReference>
<dbReference type="RefSeq" id="WP_000619493.1">
    <property type="nucleotide sequence ID" value="NZ_MTFT01000008.1"/>
</dbReference>
<dbReference type="BMRB" id="B1IVH7"/>
<dbReference type="SMR" id="B1IVH7"/>
<dbReference type="GeneID" id="75174142"/>
<dbReference type="KEGG" id="ecl:EcolC_4116"/>
<dbReference type="HOGENOM" id="CLU_100689_2_0_6"/>
<dbReference type="UniPathway" id="UPA00125"/>
<dbReference type="GO" id="GO:0005737">
    <property type="term" value="C:cytoplasm"/>
    <property type="evidence" value="ECO:0007669"/>
    <property type="project" value="UniProtKB-SubCell"/>
</dbReference>
<dbReference type="GO" id="GO:0062192">
    <property type="term" value="F:L-rhamnose mutarotase activity"/>
    <property type="evidence" value="ECO:0007669"/>
    <property type="project" value="UniProtKB-EC"/>
</dbReference>
<dbReference type="GO" id="GO:0019301">
    <property type="term" value="P:rhamnose catabolic process"/>
    <property type="evidence" value="ECO:0007669"/>
    <property type="project" value="TreeGrafter"/>
</dbReference>
<dbReference type="FunFam" id="3.30.70.100:FF:000013">
    <property type="entry name" value="L-rhamnose mutarotase"/>
    <property type="match status" value="1"/>
</dbReference>
<dbReference type="Gene3D" id="3.30.70.100">
    <property type="match status" value="1"/>
</dbReference>
<dbReference type="HAMAP" id="MF_01663">
    <property type="entry name" value="L_rham_rotase"/>
    <property type="match status" value="1"/>
</dbReference>
<dbReference type="InterPro" id="IPR011008">
    <property type="entry name" value="Dimeric_a/b-barrel"/>
</dbReference>
<dbReference type="InterPro" id="IPR013448">
    <property type="entry name" value="L-rhamnose_mutarotase"/>
</dbReference>
<dbReference type="InterPro" id="IPR008000">
    <property type="entry name" value="Rham/fucose_mutarotase"/>
</dbReference>
<dbReference type="NCBIfam" id="TIGR02625">
    <property type="entry name" value="YiiL_rotase"/>
    <property type="match status" value="1"/>
</dbReference>
<dbReference type="PANTHER" id="PTHR34389">
    <property type="entry name" value="L-RHAMNOSE MUTAROTASE"/>
    <property type="match status" value="1"/>
</dbReference>
<dbReference type="PANTHER" id="PTHR34389:SF2">
    <property type="entry name" value="L-RHAMNOSE MUTAROTASE"/>
    <property type="match status" value="1"/>
</dbReference>
<dbReference type="Pfam" id="PF05336">
    <property type="entry name" value="rhaM"/>
    <property type="match status" value="1"/>
</dbReference>
<dbReference type="SUPFAM" id="SSF54909">
    <property type="entry name" value="Dimeric alpha+beta barrel"/>
    <property type="match status" value="1"/>
</dbReference>
<gene>
    <name evidence="1" type="primary">rhaM</name>
    <name type="ordered locus">EcolC_4116</name>
</gene>
<name>RHAM_ECOLC</name>
<protein>
    <recommendedName>
        <fullName evidence="1">L-rhamnose mutarotase</fullName>
        <ecNumber evidence="1">5.1.3.32</ecNumber>
    </recommendedName>
    <alternativeName>
        <fullName evidence="1">Rhamnose 1-epimerase</fullName>
    </alternativeName>
    <alternativeName>
        <fullName evidence="1">Type-3 mutarotase</fullName>
    </alternativeName>
</protein>